<gene>
    <name evidence="1" type="primary">gcvH</name>
    <name type="ordered locus">RSc3294</name>
    <name type="ORF">RS02523</name>
</gene>
<keyword id="KW-0450">Lipoyl</keyword>
<keyword id="KW-1185">Reference proteome</keyword>
<comment type="function">
    <text evidence="1">The glycine cleavage system catalyzes the degradation of glycine. The H protein shuttles the methylamine group of glycine from the P protein to the T protein.</text>
</comment>
<comment type="cofactor">
    <cofactor evidence="1">
        <name>(R)-lipoate</name>
        <dbReference type="ChEBI" id="CHEBI:83088"/>
    </cofactor>
    <text evidence="1">Binds 1 lipoyl cofactor covalently.</text>
</comment>
<comment type="subunit">
    <text evidence="1">The glycine cleavage system is composed of four proteins: P, T, L and H.</text>
</comment>
<comment type="similarity">
    <text evidence="1">Belongs to the GcvH family.</text>
</comment>
<reference key="1">
    <citation type="journal article" date="2002" name="Nature">
        <title>Genome sequence of the plant pathogen Ralstonia solanacearum.</title>
        <authorList>
            <person name="Salanoubat M."/>
            <person name="Genin S."/>
            <person name="Artiguenave F."/>
            <person name="Gouzy J."/>
            <person name="Mangenot S."/>
            <person name="Arlat M."/>
            <person name="Billault A."/>
            <person name="Brottier P."/>
            <person name="Camus J.-C."/>
            <person name="Cattolico L."/>
            <person name="Chandler M."/>
            <person name="Choisne N."/>
            <person name="Claudel-Renard C."/>
            <person name="Cunnac S."/>
            <person name="Demange N."/>
            <person name="Gaspin C."/>
            <person name="Lavie M."/>
            <person name="Moisan A."/>
            <person name="Robert C."/>
            <person name="Saurin W."/>
            <person name="Schiex T."/>
            <person name="Siguier P."/>
            <person name="Thebault P."/>
            <person name="Whalen M."/>
            <person name="Wincker P."/>
            <person name="Levy M."/>
            <person name="Weissenbach J."/>
            <person name="Boucher C.A."/>
        </authorList>
    </citation>
    <scope>NUCLEOTIDE SEQUENCE [LARGE SCALE GENOMIC DNA]</scope>
    <source>
        <strain>ATCC BAA-1114 / GMI1000</strain>
    </source>
</reference>
<feature type="chain" id="PRO_0000166239" description="Glycine cleavage system H protein">
    <location>
        <begin position="1"/>
        <end position="127"/>
    </location>
</feature>
<feature type="domain" description="Lipoyl-binding" evidence="2">
    <location>
        <begin position="24"/>
        <end position="105"/>
    </location>
</feature>
<feature type="modified residue" description="N6-lipoyllysine" evidence="1">
    <location>
        <position position="65"/>
    </location>
</feature>
<proteinExistence type="inferred from homology"/>
<evidence type="ECO:0000255" key="1">
    <source>
        <dbReference type="HAMAP-Rule" id="MF_00272"/>
    </source>
</evidence>
<evidence type="ECO:0000255" key="2">
    <source>
        <dbReference type="PROSITE-ProRule" id="PRU01066"/>
    </source>
</evidence>
<organism>
    <name type="scientific">Ralstonia nicotianae (strain ATCC BAA-1114 / GMI1000)</name>
    <name type="common">Ralstonia solanacearum</name>
    <dbReference type="NCBI Taxonomy" id="267608"/>
    <lineage>
        <taxon>Bacteria</taxon>
        <taxon>Pseudomonadati</taxon>
        <taxon>Pseudomonadota</taxon>
        <taxon>Betaproteobacteria</taxon>
        <taxon>Burkholderiales</taxon>
        <taxon>Burkholderiaceae</taxon>
        <taxon>Ralstonia</taxon>
        <taxon>Ralstonia solanacearum species complex</taxon>
    </lineage>
</organism>
<protein>
    <recommendedName>
        <fullName evidence="1">Glycine cleavage system H protein</fullName>
    </recommendedName>
</protein>
<accession>Q8XU99</accession>
<dbReference type="EMBL" id="AL646052">
    <property type="protein sequence ID" value="CAD17082.1"/>
    <property type="molecule type" value="Genomic_DNA"/>
</dbReference>
<dbReference type="RefSeq" id="WP_011003178.1">
    <property type="nucleotide sequence ID" value="NC_003295.1"/>
</dbReference>
<dbReference type="SMR" id="Q8XU99"/>
<dbReference type="STRING" id="267608.RSc3294"/>
<dbReference type="EnsemblBacteria" id="CAD17082">
    <property type="protein sequence ID" value="CAD17082"/>
    <property type="gene ID" value="RSc3294"/>
</dbReference>
<dbReference type="KEGG" id="rso:RSc3294"/>
<dbReference type="eggNOG" id="COG0509">
    <property type="taxonomic scope" value="Bacteria"/>
</dbReference>
<dbReference type="HOGENOM" id="CLU_097408_2_1_4"/>
<dbReference type="Proteomes" id="UP000001436">
    <property type="component" value="Chromosome"/>
</dbReference>
<dbReference type="GO" id="GO:0005829">
    <property type="term" value="C:cytosol"/>
    <property type="evidence" value="ECO:0007669"/>
    <property type="project" value="TreeGrafter"/>
</dbReference>
<dbReference type="GO" id="GO:0005960">
    <property type="term" value="C:glycine cleavage complex"/>
    <property type="evidence" value="ECO:0007669"/>
    <property type="project" value="InterPro"/>
</dbReference>
<dbReference type="GO" id="GO:0019464">
    <property type="term" value="P:glycine decarboxylation via glycine cleavage system"/>
    <property type="evidence" value="ECO:0007669"/>
    <property type="project" value="UniProtKB-UniRule"/>
</dbReference>
<dbReference type="CDD" id="cd06848">
    <property type="entry name" value="GCS_H"/>
    <property type="match status" value="1"/>
</dbReference>
<dbReference type="Gene3D" id="2.40.50.100">
    <property type="match status" value="1"/>
</dbReference>
<dbReference type="HAMAP" id="MF_00272">
    <property type="entry name" value="GcvH"/>
    <property type="match status" value="1"/>
</dbReference>
<dbReference type="InterPro" id="IPR003016">
    <property type="entry name" value="2-oxoA_DH_lipoyl-BS"/>
</dbReference>
<dbReference type="InterPro" id="IPR000089">
    <property type="entry name" value="Biotin_lipoyl"/>
</dbReference>
<dbReference type="InterPro" id="IPR002930">
    <property type="entry name" value="GCV_H"/>
</dbReference>
<dbReference type="InterPro" id="IPR033753">
    <property type="entry name" value="GCV_H/Fam206"/>
</dbReference>
<dbReference type="InterPro" id="IPR017453">
    <property type="entry name" value="GCV_H_sub"/>
</dbReference>
<dbReference type="InterPro" id="IPR011053">
    <property type="entry name" value="Single_hybrid_motif"/>
</dbReference>
<dbReference type="NCBIfam" id="TIGR00527">
    <property type="entry name" value="gcvH"/>
    <property type="match status" value="1"/>
</dbReference>
<dbReference type="NCBIfam" id="NF002270">
    <property type="entry name" value="PRK01202.1"/>
    <property type="match status" value="1"/>
</dbReference>
<dbReference type="PANTHER" id="PTHR11715">
    <property type="entry name" value="GLYCINE CLEAVAGE SYSTEM H PROTEIN"/>
    <property type="match status" value="1"/>
</dbReference>
<dbReference type="PANTHER" id="PTHR11715:SF3">
    <property type="entry name" value="GLYCINE CLEAVAGE SYSTEM H PROTEIN-RELATED"/>
    <property type="match status" value="1"/>
</dbReference>
<dbReference type="Pfam" id="PF01597">
    <property type="entry name" value="GCV_H"/>
    <property type="match status" value="1"/>
</dbReference>
<dbReference type="SUPFAM" id="SSF51230">
    <property type="entry name" value="Single hybrid motif"/>
    <property type="match status" value="1"/>
</dbReference>
<dbReference type="PROSITE" id="PS50968">
    <property type="entry name" value="BIOTINYL_LIPOYL"/>
    <property type="match status" value="1"/>
</dbReference>
<dbReference type="PROSITE" id="PS00189">
    <property type="entry name" value="LIPOYL"/>
    <property type="match status" value="1"/>
</dbReference>
<name>GCSH_RALN1</name>
<sequence length="127" mass="13571">MSNTPVELKYTESHEWVRTEADGTLTIGITDLAQEQLGDIVFLELPDTGRQVKQGEAIAVVESVKAASDIYAPVSGEVIASNADATESPESVNEDAYDAWLFKIKPANADDVNALLSADQYQAKAGA</sequence>